<evidence type="ECO:0000250" key="1">
    <source>
        <dbReference type="UniProtKB" id="Q9NZL9"/>
    </source>
</evidence>
<evidence type="ECO:0000303" key="2">
    <source ref="1"/>
</evidence>
<evidence type="ECO:0000305" key="3"/>
<feature type="chain" id="PRO_0000287522" description="Methionine adenosyltransferase 2 subunit beta">
    <location>
        <begin position="1"/>
        <end position="334"/>
    </location>
</feature>
<feature type="region of interest" description="Required for interaction with MAT2A" evidence="1">
    <location>
        <begin position="319"/>
        <end position="334"/>
    </location>
</feature>
<feature type="binding site" evidence="1">
    <location>
        <begin position="37"/>
        <end position="40"/>
    </location>
    <ligand>
        <name>NADP(+)</name>
        <dbReference type="ChEBI" id="CHEBI:58349"/>
    </ligand>
</feature>
<feature type="binding site" evidence="1">
    <location>
        <begin position="60"/>
        <end position="62"/>
    </location>
    <ligand>
        <name>NADP(+)</name>
        <dbReference type="ChEBI" id="CHEBI:58349"/>
    </ligand>
</feature>
<feature type="binding site" evidence="1">
    <location>
        <begin position="71"/>
        <end position="72"/>
    </location>
    <ligand>
        <name>NADP(+)</name>
        <dbReference type="ChEBI" id="CHEBI:58349"/>
    </ligand>
</feature>
<feature type="binding site" evidence="1">
    <location>
        <position position="93"/>
    </location>
    <ligand>
        <name>NADP(+)</name>
        <dbReference type="ChEBI" id="CHEBI:58349"/>
    </ligand>
</feature>
<feature type="binding site" evidence="1">
    <location>
        <position position="97"/>
    </location>
    <ligand>
        <name>NADP(+)</name>
        <dbReference type="ChEBI" id="CHEBI:58349"/>
    </ligand>
</feature>
<feature type="binding site" evidence="1">
    <location>
        <position position="159"/>
    </location>
    <ligand>
        <name>NADP(+)</name>
        <dbReference type="ChEBI" id="CHEBI:58349"/>
    </ligand>
</feature>
<feature type="binding site" evidence="1">
    <location>
        <position position="185"/>
    </location>
    <ligand>
        <name>NADP(+)</name>
        <dbReference type="ChEBI" id="CHEBI:58349"/>
    </ligand>
</feature>
<feature type="modified residue" description="Phosphothreonine" evidence="1">
    <location>
        <position position="309"/>
    </location>
</feature>
<feature type="splice variant" id="VSP_025544" description="In isoform 2." evidence="2">
    <original>MVGREKELSIHFVPGSCRLVE</original>
    <variation>MPEMPEDMEQ</variation>
    <location>
        <begin position="1"/>
        <end position="21"/>
    </location>
</feature>
<feature type="sequence conflict" description="In Ref. 1; CAH91964." evidence="3" ref="1">
    <original>N</original>
    <variation>S</variation>
    <location>
        <position position="25"/>
    </location>
</feature>
<dbReference type="EMBL" id="CR861310">
    <property type="protein sequence ID" value="CAH93376.1"/>
    <property type="molecule type" value="mRNA"/>
</dbReference>
<dbReference type="EMBL" id="CR859806">
    <property type="protein sequence ID" value="CAH91964.1"/>
    <property type="molecule type" value="mRNA"/>
</dbReference>
<dbReference type="RefSeq" id="NP_001126137.1">
    <property type="nucleotide sequence ID" value="NM_001132665.1"/>
</dbReference>
<dbReference type="RefSeq" id="XP_009239534.1">
    <molecule id="Q5R4E0-1"/>
    <property type="nucleotide sequence ID" value="XM_009241259.3"/>
</dbReference>
<dbReference type="SMR" id="Q5R4E0"/>
<dbReference type="FunCoup" id="Q5R4E0">
    <property type="interactions" value="1332"/>
</dbReference>
<dbReference type="STRING" id="9601.ENSPPYP00000017930"/>
<dbReference type="Ensembl" id="ENSPPYT00000039719.1">
    <molecule id="Q5R4E0-2"/>
    <property type="protein sequence ID" value="ENSPPYP00000037996.1"/>
    <property type="gene ID" value="ENSPPYG00000016020.3"/>
</dbReference>
<dbReference type="GeneID" id="100173095"/>
<dbReference type="KEGG" id="pon:100173095"/>
<dbReference type="CTD" id="27430"/>
<dbReference type="eggNOG" id="KOG1430">
    <property type="taxonomic scope" value="Eukaryota"/>
</dbReference>
<dbReference type="GeneTree" id="ENSGT00390000006721"/>
<dbReference type="HOGENOM" id="CLU_045518_0_0_1"/>
<dbReference type="InParanoid" id="Q5R4E0"/>
<dbReference type="OrthoDB" id="6235964at2759"/>
<dbReference type="TreeFam" id="TF332849"/>
<dbReference type="UniPathway" id="UPA00315">
    <property type="reaction ID" value="UER00080"/>
</dbReference>
<dbReference type="Proteomes" id="UP000001595">
    <property type="component" value="Chromosome 5"/>
</dbReference>
<dbReference type="GO" id="GO:0048269">
    <property type="term" value="C:methionine adenosyltransferase complex"/>
    <property type="evidence" value="ECO:0000250"/>
    <property type="project" value="UniProtKB"/>
</dbReference>
<dbReference type="GO" id="GO:0048270">
    <property type="term" value="F:methionine adenosyltransferase regulator activity"/>
    <property type="evidence" value="ECO:0000250"/>
    <property type="project" value="UniProtKB"/>
</dbReference>
<dbReference type="GO" id="GO:0006730">
    <property type="term" value="P:one-carbon metabolic process"/>
    <property type="evidence" value="ECO:0007669"/>
    <property type="project" value="UniProtKB-KW"/>
</dbReference>
<dbReference type="GO" id="GO:0006556">
    <property type="term" value="P:S-adenosylmethionine biosynthetic process"/>
    <property type="evidence" value="ECO:0000250"/>
    <property type="project" value="UniProtKB"/>
</dbReference>
<dbReference type="CDD" id="cd05254">
    <property type="entry name" value="dTDP_HR_like_SDR_e"/>
    <property type="match status" value="1"/>
</dbReference>
<dbReference type="FunFam" id="3.40.50.720:FF:000133">
    <property type="entry name" value="Methionine adenosyltransferase 2 subunit beta"/>
    <property type="match status" value="1"/>
</dbReference>
<dbReference type="Gene3D" id="3.40.50.720">
    <property type="entry name" value="NAD(P)-binding Rossmann-like Domain"/>
    <property type="match status" value="1"/>
</dbReference>
<dbReference type="InterPro" id="IPR005913">
    <property type="entry name" value="dTDP_dehydrorham_reduct"/>
</dbReference>
<dbReference type="InterPro" id="IPR036291">
    <property type="entry name" value="NAD(P)-bd_dom_sf"/>
</dbReference>
<dbReference type="InterPro" id="IPR029903">
    <property type="entry name" value="RmlD-like-bd"/>
</dbReference>
<dbReference type="PANTHER" id="PTHR10491">
    <property type="entry name" value="DTDP-4-DEHYDRORHAMNOSE REDUCTASE"/>
    <property type="match status" value="1"/>
</dbReference>
<dbReference type="PANTHER" id="PTHR10491:SF4">
    <property type="entry name" value="METHIONINE ADENOSYLTRANSFERASE 2 SUBUNIT BETA"/>
    <property type="match status" value="1"/>
</dbReference>
<dbReference type="Pfam" id="PF04321">
    <property type="entry name" value="RmlD_sub_bind"/>
    <property type="match status" value="1"/>
</dbReference>
<dbReference type="SUPFAM" id="SSF51735">
    <property type="entry name" value="NAD(P)-binding Rossmann-fold domains"/>
    <property type="match status" value="1"/>
</dbReference>
<comment type="function">
    <text evidence="1">Regulatory subunit of S-adenosylmethionine synthetase 2, an enzyme that catalyzes the formation of S-adenosylmethionine from methionine and ATP. Regulates MAT2A catalytic activity by changing its kinetic properties, increasing its affinity for L-methionine. Can bind NADP (in vitro).</text>
</comment>
<comment type="pathway">
    <text evidence="1">Amino-acid biosynthesis; S-adenosyl-L-methionine biosynthesis; S-adenosyl-L-methionine from L-methionine: step 1/1.</text>
</comment>
<comment type="subunit">
    <text evidence="1">Heterotrimer; composed of a catalytic MAT2A homodimer that binds one regulatory MAT2B chain. Heterohexamer; composed of a central, catalytic MAT2A homotetramer flanked on either side by a regulatory MAT2B chain. NADP binding increases the affinity for MAT2A.</text>
</comment>
<comment type="alternative products">
    <event type="alternative splicing"/>
    <isoform>
        <id>Q5R4E0-1</id>
        <name>1</name>
        <sequence type="displayed"/>
    </isoform>
    <isoform>
        <id>Q5R4E0-2</id>
        <name>2</name>
        <sequence type="described" ref="VSP_025544"/>
    </isoform>
</comment>
<comment type="similarity">
    <text evidence="3">Belongs to the dTDP-4-dehydrorhamnose reductase family. MAT2B subfamily.</text>
</comment>
<proteinExistence type="evidence at transcript level"/>
<protein>
    <recommendedName>
        <fullName>Methionine adenosyltransferase 2 subunit beta</fullName>
    </recommendedName>
    <alternativeName>
        <fullName>Methionine adenosyltransferase II beta</fullName>
        <shortName>MAT II beta</shortName>
    </alternativeName>
</protein>
<organism>
    <name type="scientific">Pongo abelii</name>
    <name type="common">Sumatran orangutan</name>
    <name type="synonym">Pongo pygmaeus abelii</name>
    <dbReference type="NCBI Taxonomy" id="9601"/>
    <lineage>
        <taxon>Eukaryota</taxon>
        <taxon>Metazoa</taxon>
        <taxon>Chordata</taxon>
        <taxon>Craniata</taxon>
        <taxon>Vertebrata</taxon>
        <taxon>Euteleostomi</taxon>
        <taxon>Mammalia</taxon>
        <taxon>Eutheria</taxon>
        <taxon>Euarchontoglires</taxon>
        <taxon>Primates</taxon>
        <taxon>Haplorrhini</taxon>
        <taxon>Catarrhini</taxon>
        <taxon>Hominidae</taxon>
        <taxon>Pongo</taxon>
    </lineage>
</organism>
<reference key="1">
    <citation type="submission" date="2004-11" db="EMBL/GenBank/DDBJ databases">
        <authorList>
            <consortium name="The German cDNA consortium"/>
        </authorList>
    </citation>
    <scope>NUCLEOTIDE SEQUENCE [LARGE SCALE MRNA] (ISOFORMS 1 AND 2)</scope>
    <source>
        <tissue>Brain cortex</tissue>
        <tissue>Heart</tissue>
    </source>
</reference>
<keyword id="KW-0025">Alternative splicing</keyword>
<keyword id="KW-0521">NADP</keyword>
<keyword id="KW-0554">One-carbon metabolism</keyword>
<keyword id="KW-0597">Phosphoprotein</keyword>
<keyword id="KW-1185">Reference proteome</keyword>
<name>MAT2B_PONAB</name>
<accession>Q5R4E0</accession>
<accession>Q5R8E6</accession>
<gene>
    <name type="primary">MAT2B</name>
</gene>
<sequence length="334" mass="37552">MVGREKELSIHFVPGSCRLVEEEVNIPNRRVLVTGATGLLGRAVHKEFQQNNWHAVGCGFRRARPKFEQVNLLDSNAVHHIIHDFQPHVIVHCAAERRPDVVENQPDAASQLNVDASGNLAKEAAAVGAFLIYISSDYVFDGTNPPYREEDIPAPLNLYGKTKLDGEKAVLENNLGAAVLRIPILYGEVEKLEESAVTVMFDKVQFSNKSANMDHWQQRFPTHVKDVATVCRQLAEKRMLDPSIKGTFHWSGNEQMTKYEMACAIADAFNLPSSHLRPITDSPVLGAQRPRNAQLDCSKLETLGIGQRTPFRIGIKESLWPFLIDKRWRQTVFH</sequence>